<reference key="1">
    <citation type="journal article" date="2009" name="PLoS ONE">
        <title>Genome sequence of the pathogenic intestinal spirochete Brachyspira hyodysenteriae reveals adaptations to its lifestyle in the porcine large intestine.</title>
        <authorList>
            <person name="Bellgard M.I."/>
            <person name="Wanchanthuek P."/>
            <person name="La T."/>
            <person name="Ryan K."/>
            <person name="Moolhuijzen P."/>
            <person name="Albertyn Z."/>
            <person name="Shaban B."/>
            <person name="Motro Y."/>
            <person name="Dunn D.S."/>
            <person name="Schibeci D."/>
            <person name="Hunter A."/>
            <person name="Barrero R."/>
            <person name="Phillips N.D."/>
            <person name="Hampson D.J."/>
        </authorList>
    </citation>
    <scope>NUCLEOTIDE SEQUENCE [LARGE SCALE GENOMIC DNA]</scope>
    <source>
        <strain>ATCC 49526 / WA1</strain>
    </source>
</reference>
<gene>
    <name evidence="1" type="primary">clpP</name>
    <name type="ordered locus">BHWA1_02221</name>
</gene>
<accession>C0QW91</accession>
<comment type="function">
    <text evidence="1">Cleaves peptides in various proteins in a process that requires ATP hydrolysis. Has a chymotrypsin-like activity. Plays a major role in the degradation of misfolded proteins.</text>
</comment>
<comment type="catalytic activity">
    <reaction evidence="1">
        <text>Hydrolysis of proteins to small peptides in the presence of ATP and magnesium. alpha-casein is the usual test substrate. In the absence of ATP, only oligopeptides shorter than five residues are hydrolyzed (such as succinyl-Leu-Tyr-|-NHMec, and Leu-Tyr-Leu-|-Tyr-Trp, in which cleavage of the -Tyr-|-Leu- and -Tyr-|-Trp bonds also occurs).</text>
        <dbReference type="EC" id="3.4.21.92"/>
    </reaction>
</comment>
<comment type="subunit">
    <text evidence="1">Fourteen ClpP subunits assemble into 2 heptameric rings which stack back to back to give a disk-like structure with a central cavity, resembling the structure of eukaryotic proteasomes.</text>
</comment>
<comment type="subcellular location">
    <subcellularLocation>
        <location evidence="1">Cytoplasm</location>
    </subcellularLocation>
</comment>
<comment type="similarity">
    <text evidence="1">Belongs to the peptidase S14 family.</text>
</comment>
<dbReference type="EC" id="3.4.21.92" evidence="1"/>
<dbReference type="EMBL" id="CP001357">
    <property type="protein sequence ID" value="ACN84677.1"/>
    <property type="molecule type" value="Genomic_DNA"/>
</dbReference>
<dbReference type="SMR" id="C0QW91"/>
<dbReference type="STRING" id="565034.BHWA1_02221"/>
<dbReference type="MEROPS" id="S14.001"/>
<dbReference type="KEGG" id="bhy:BHWA1_02221"/>
<dbReference type="eggNOG" id="COG0740">
    <property type="taxonomic scope" value="Bacteria"/>
</dbReference>
<dbReference type="HOGENOM" id="CLU_058707_3_2_12"/>
<dbReference type="Proteomes" id="UP000001803">
    <property type="component" value="Chromosome"/>
</dbReference>
<dbReference type="GO" id="GO:0005737">
    <property type="term" value="C:cytoplasm"/>
    <property type="evidence" value="ECO:0007669"/>
    <property type="project" value="UniProtKB-SubCell"/>
</dbReference>
<dbReference type="GO" id="GO:0009368">
    <property type="term" value="C:endopeptidase Clp complex"/>
    <property type="evidence" value="ECO:0007669"/>
    <property type="project" value="TreeGrafter"/>
</dbReference>
<dbReference type="GO" id="GO:0004176">
    <property type="term" value="F:ATP-dependent peptidase activity"/>
    <property type="evidence" value="ECO:0007669"/>
    <property type="project" value="InterPro"/>
</dbReference>
<dbReference type="GO" id="GO:0051117">
    <property type="term" value="F:ATPase binding"/>
    <property type="evidence" value="ECO:0007669"/>
    <property type="project" value="TreeGrafter"/>
</dbReference>
<dbReference type="GO" id="GO:0004252">
    <property type="term" value="F:serine-type endopeptidase activity"/>
    <property type="evidence" value="ECO:0007669"/>
    <property type="project" value="UniProtKB-UniRule"/>
</dbReference>
<dbReference type="GO" id="GO:0006515">
    <property type="term" value="P:protein quality control for misfolded or incompletely synthesized proteins"/>
    <property type="evidence" value="ECO:0007669"/>
    <property type="project" value="TreeGrafter"/>
</dbReference>
<dbReference type="CDD" id="cd07017">
    <property type="entry name" value="S14_ClpP_2"/>
    <property type="match status" value="1"/>
</dbReference>
<dbReference type="FunFam" id="3.90.226.10:FF:000001">
    <property type="entry name" value="ATP-dependent Clp protease proteolytic subunit"/>
    <property type="match status" value="1"/>
</dbReference>
<dbReference type="Gene3D" id="3.90.226.10">
    <property type="entry name" value="2-enoyl-CoA Hydratase, Chain A, domain 1"/>
    <property type="match status" value="1"/>
</dbReference>
<dbReference type="HAMAP" id="MF_00444">
    <property type="entry name" value="ClpP"/>
    <property type="match status" value="1"/>
</dbReference>
<dbReference type="InterPro" id="IPR001907">
    <property type="entry name" value="ClpP"/>
</dbReference>
<dbReference type="InterPro" id="IPR029045">
    <property type="entry name" value="ClpP/crotonase-like_dom_sf"/>
</dbReference>
<dbReference type="InterPro" id="IPR023562">
    <property type="entry name" value="ClpP/TepA"/>
</dbReference>
<dbReference type="InterPro" id="IPR033135">
    <property type="entry name" value="ClpP_His_AS"/>
</dbReference>
<dbReference type="InterPro" id="IPR018215">
    <property type="entry name" value="ClpP_Ser_AS"/>
</dbReference>
<dbReference type="NCBIfam" id="TIGR00493">
    <property type="entry name" value="clpP"/>
    <property type="match status" value="1"/>
</dbReference>
<dbReference type="NCBIfam" id="NF001368">
    <property type="entry name" value="PRK00277.1"/>
    <property type="match status" value="1"/>
</dbReference>
<dbReference type="NCBIfam" id="NF009205">
    <property type="entry name" value="PRK12553.1"/>
    <property type="match status" value="1"/>
</dbReference>
<dbReference type="PANTHER" id="PTHR10381">
    <property type="entry name" value="ATP-DEPENDENT CLP PROTEASE PROTEOLYTIC SUBUNIT"/>
    <property type="match status" value="1"/>
</dbReference>
<dbReference type="PANTHER" id="PTHR10381:SF70">
    <property type="entry name" value="ATP-DEPENDENT CLP PROTEASE PROTEOLYTIC SUBUNIT"/>
    <property type="match status" value="1"/>
</dbReference>
<dbReference type="Pfam" id="PF00574">
    <property type="entry name" value="CLP_protease"/>
    <property type="match status" value="1"/>
</dbReference>
<dbReference type="PRINTS" id="PR00127">
    <property type="entry name" value="CLPPROTEASEP"/>
</dbReference>
<dbReference type="SUPFAM" id="SSF52096">
    <property type="entry name" value="ClpP/crotonase"/>
    <property type="match status" value="1"/>
</dbReference>
<dbReference type="PROSITE" id="PS00382">
    <property type="entry name" value="CLP_PROTEASE_HIS"/>
    <property type="match status" value="1"/>
</dbReference>
<dbReference type="PROSITE" id="PS00381">
    <property type="entry name" value="CLP_PROTEASE_SER"/>
    <property type="match status" value="1"/>
</dbReference>
<name>CLPP_BRAHW</name>
<proteinExistence type="inferred from homology"/>
<organism>
    <name type="scientific">Brachyspira hyodysenteriae (strain ATCC 49526 / WA1)</name>
    <dbReference type="NCBI Taxonomy" id="565034"/>
    <lineage>
        <taxon>Bacteria</taxon>
        <taxon>Pseudomonadati</taxon>
        <taxon>Spirochaetota</taxon>
        <taxon>Spirochaetia</taxon>
        <taxon>Brachyspirales</taxon>
        <taxon>Brachyspiraceae</taxon>
        <taxon>Brachyspira</taxon>
    </lineage>
</organism>
<keyword id="KW-0963">Cytoplasm</keyword>
<keyword id="KW-0378">Hydrolase</keyword>
<keyword id="KW-0645">Protease</keyword>
<keyword id="KW-0720">Serine protease</keyword>
<feature type="chain" id="PRO_1000206142" description="ATP-dependent Clp protease proteolytic subunit">
    <location>
        <begin position="1"/>
        <end position="198"/>
    </location>
</feature>
<feature type="active site" description="Nucleophile" evidence="1">
    <location>
        <position position="102"/>
    </location>
</feature>
<feature type="active site" evidence="1">
    <location>
        <position position="127"/>
    </location>
</feature>
<sequence length="198" mass="21842">MEKNYMTIPYVIEQTSRGERSYDIYSRLLKDRIIFLGGEINDDVANVVIAQLLFLESADPEKDISLYINSPGGVVTAALGMYDTMQYVKPDVATLCVGQAASAGALLLAGGAKGKRFATANSRIMIHQPSGGSRGMVTDMEIQLKETIRLKSILNNIMANHTGQDIKKLEADMDRDYFMSAEEAKDYGIIDKVFSSRE</sequence>
<protein>
    <recommendedName>
        <fullName evidence="1">ATP-dependent Clp protease proteolytic subunit</fullName>
        <ecNumber evidence="1">3.4.21.92</ecNumber>
    </recommendedName>
    <alternativeName>
        <fullName evidence="1">Endopeptidase Clp</fullName>
    </alternativeName>
</protein>
<evidence type="ECO:0000255" key="1">
    <source>
        <dbReference type="HAMAP-Rule" id="MF_00444"/>
    </source>
</evidence>